<organism>
    <name type="scientific">Acinetobacter baylyi (strain ATCC 33305 / BD413 / ADP1)</name>
    <dbReference type="NCBI Taxonomy" id="62977"/>
    <lineage>
        <taxon>Bacteria</taxon>
        <taxon>Pseudomonadati</taxon>
        <taxon>Pseudomonadota</taxon>
        <taxon>Gammaproteobacteria</taxon>
        <taxon>Moraxellales</taxon>
        <taxon>Moraxellaceae</taxon>
        <taxon>Acinetobacter</taxon>
    </lineage>
</organism>
<dbReference type="EC" id="2.7.1.148" evidence="1"/>
<dbReference type="EMBL" id="CR543861">
    <property type="protein sequence ID" value="CAG69625.1"/>
    <property type="molecule type" value="Genomic_DNA"/>
</dbReference>
<dbReference type="RefSeq" id="WP_004929443.1">
    <property type="nucleotide sequence ID" value="NC_005966.1"/>
</dbReference>
<dbReference type="SMR" id="Q6F8J0"/>
<dbReference type="GeneID" id="45235135"/>
<dbReference type="KEGG" id="aci:ACIAD2903"/>
<dbReference type="eggNOG" id="COG1947">
    <property type="taxonomic scope" value="Bacteria"/>
</dbReference>
<dbReference type="HOGENOM" id="CLU_053057_3_0_6"/>
<dbReference type="OrthoDB" id="9809438at2"/>
<dbReference type="BioCyc" id="ASP62977:ACIAD_RS13100-MONOMER"/>
<dbReference type="UniPathway" id="UPA00056">
    <property type="reaction ID" value="UER00094"/>
</dbReference>
<dbReference type="Proteomes" id="UP000000430">
    <property type="component" value="Chromosome"/>
</dbReference>
<dbReference type="GO" id="GO:0050515">
    <property type="term" value="F:4-(cytidine 5'-diphospho)-2-C-methyl-D-erythritol kinase activity"/>
    <property type="evidence" value="ECO:0007669"/>
    <property type="project" value="UniProtKB-UniRule"/>
</dbReference>
<dbReference type="GO" id="GO:0005524">
    <property type="term" value="F:ATP binding"/>
    <property type="evidence" value="ECO:0007669"/>
    <property type="project" value="UniProtKB-UniRule"/>
</dbReference>
<dbReference type="GO" id="GO:0019288">
    <property type="term" value="P:isopentenyl diphosphate biosynthetic process, methylerythritol 4-phosphate pathway"/>
    <property type="evidence" value="ECO:0007669"/>
    <property type="project" value="UniProtKB-UniRule"/>
</dbReference>
<dbReference type="GO" id="GO:0016114">
    <property type="term" value="P:terpenoid biosynthetic process"/>
    <property type="evidence" value="ECO:0007669"/>
    <property type="project" value="InterPro"/>
</dbReference>
<dbReference type="Gene3D" id="3.30.230.10">
    <property type="match status" value="1"/>
</dbReference>
<dbReference type="Gene3D" id="3.30.70.890">
    <property type="entry name" value="GHMP kinase, C-terminal domain"/>
    <property type="match status" value="1"/>
</dbReference>
<dbReference type="HAMAP" id="MF_00061">
    <property type="entry name" value="IspE"/>
    <property type="match status" value="1"/>
</dbReference>
<dbReference type="InterPro" id="IPR013750">
    <property type="entry name" value="GHMP_kinase_C_dom"/>
</dbReference>
<dbReference type="InterPro" id="IPR036554">
    <property type="entry name" value="GHMP_kinase_C_sf"/>
</dbReference>
<dbReference type="InterPro" id="IPR006204">
    <property type="entry name" value="GHMP_kinase_N_dom"/>
</dbReference>
<dbReference type="InterPro" id="IPR004424">
    <property type="entry name" value="IspE"/>
</dbReference>
<dbReference type="InterPro" id="IPR020568">
    <property type="entry name" value="Ribosomal_Su5_D2-typ_SF"/>
</dbReference>
<dbReference type="InterPro" id="IPR014721">
    <property type="entry name" value="Ribsml_uS5_D2-typ_fold_subgr"/>
</dbReference>
<dbReference type="NCBIfam" id="TIGR00154">
    <property type="entry name" value="ispE"/>
    <property type="match status" value="1"/>
</dbReference>
<dbReference type="PANTHER" id="PTHR43527">
    <property type="entry name" value="4-DIPHOSPHOCYTIDYL-2-C-METHYL-D-ERYTHRITOL KINASE, CHLOROPLASTIC"/>
    <property type="match status" value="1"/>
</dbReference>
<dbReference type="PANTHER" id="PTHR43527:SF2">
    <property type="entry name" value="4-DIPHOSPHOCYTIDYL-2-C-METHYL-D-ERYTHRITOL KINASE, CHLOROPLASTIC"/>
    <property type="match status" value="1"/>
</dbReference>
<dbReference type="Pfam" id="PF08544">
    <property type="entry name" value="GHMP_kinases_C"/>
    <property type="match status" value="1"/>
</dbReference>
<dbReference type="Pfam" id="PF00288">
    <property type="entry name" value="GHMP_kinases_N"/>
    <property type="match status" value="1"/>
</dbReference>
<dbReference type="PIRSF" id="PIRSF010376">
    <property type="entry name" value="IspE"/>
    <property type="match status" value="1"/>
</dbReference>
<dbReference type="SUPFAM" id="SSF55060">
    <property type="entry name" value="GHMP Kinase, C-terminal domain"/>
    <property type="match status" value="1"/>
</dbReference>
<dbReference type="SUPFAM" id="SSF54211">
    <property type="entry name" value="Ribosomal protein S5 domain 2-like"/>
    <property type="match status" value="1"/>
</dbReference>
<protein>
    <recommendedName>
        <fullName evidence="1">4-diphosphocytidyl-2-C-methyl-D-erythritol kinase</fullName>
        <shortName evidence="1">CMK</shortName>
        <ecNumber evidence="1">2.7.1.148</ecNumber>
    </recommendedName>
    <alternativeName>
        <fullName evidence="1">4-(cytidine-5'-diphospho)-2-C-methyl-D-erythritol kinase</fullName>
    </alternativeName>
</protein>
<sequence length="279" mass="31173">MIRVASPAKINLFLHITGRRNDGYHELQSIFQLIDLYDWMTFTPRTEAEDNLSITGIEQVDLEQNLIFRAAQLLKLYAKKYCGLNIQIEKQIPMGAGLGGGSSNAATTLLVLNQLWDCGLNLDQLAALGVKLGADVPIFIYGKNAWAEGIGEKLTFVDLDQKQYIILKPDCFISTQLLFSQKTLTRDSNRTTFCAYQLKPSDFGNNFEALARSLYPEVEEAMQYLDQFGQAKLTGTGACVFTEVTPEMNVSEIVQHAPCKSYVVHSLNKSPLSHFMTDI</sequence>
<gene>
    <name evidence="1" type="primary">ispE</name>
    <name type="ordered locus">ACIAD2903</name>
</gene>
<name>ISPE_ACIAD</name>
<comment type="function">
    <text evidence="1">Catalyzes the phosphorylation of the position 2 hydroxy group of 4-diphosphocytidyl-2C-methyl-D-erythritol.</text>
</comment>
<comment type="catalytic activity">
    <reaction evidence="1">
        <text>4-CDP-2-C-methyl-D-erythritol + ATP = 4-CDP-2-C-methyl-D-erythritol 2-phosphate + ADP + H(+)</text>
        <dbReference type="Rhea" id="RHEA:18437"/>
        <dbReference type="ChEBI" id="CHEBI:15378"/>
        <dbReference type="ChEBI" id="CHEBI:30616"/>
        <dbReference type="ChEBI" id="CHEBI:57823"/>
        <dbReference type="ChEBI" id="CHEBI:57919"/>
        <dbReference type="ChEBI" id="CHEBI:456216"/>
        <dbReference type="EC" id="2.7.1.148"/>
    </reaction>
</comment>
<comment type="pathway">
    <text evidence="1">Isoprenoid biosynthesis; isopentenyl diphosphate biosynthesis via DXP pathway; isopentenyl diphosphate from 1-deoxy-D-xylulose 5-phosphate: step 3/6.</text>
</comment>
<comment type="similarity">
    <text evidence="1">Belongs to the GHMP kinase family. IspE subfamily.</text>
</comment>
<keyword id="KW-0067">ATP-binding</keyword>
<keyword id="KW-0414">Isoprene biosynthesis</keyword>
<keyword id="KW-0418">Kinase</keyword>
<keyword id="KW-0547">Nucleotide-binding</keyword>
<keyword id="KW-0808">Transferase</keyword>
<proteinExistence type="inferred from homology"/>
<reference key="1">
    <citation type="journal article" date="2004" name="Nucleic Acids Res.">
        <title>Unique features revealed by the genome sequence of Acinetobacter sp. ADP1, a versatile and naturally transformation competent bacterium.</title>
        <authorList>
            <person name="Barbe V."/>
            <person name="Vallenet D."/>
            <person name="Fonknechten N."/>
            <person name="Kreimeyer A."/>
            <person name="Oztas S."/>
            <person name="Labarre L."/>
            <person name="Cruveiller S."/>
            <person name="Robert C."/>
            <person name="Duprat S."/>
            <person name="Wincker P."/>
            <person name="Ornston L.N."/>
            <person name="Weissenbach J."/>
            <person name="Marliere P."/>
            <person name="Cohen G.N."/>
            <person name="Medigue C."/>
        </authorList>
    </citation>
    <scope>NUCLEOTIDE SEQUENCE [LARGE SCALE GENOMIC DNA]</scope>
    <source>
        <strain>ATCC 33305 / BD413 / ADP1</strain>
    </source>
</reference>
<accession>Q6F8J0</accession>
<feature type="chain" id="PRO_0000235057" description="4-diphosphocytidyl-2-C-methyl-D-erythritol kinase">
    <location>
        <begin position="1"/>
        <end position="279"/>
    </location>
</feature>
<feature type="active site" evidence="1">
    <location>
        <position position="9"/>
    </location>
</feature>
<feature type="active site" evidence="1">
    <location>
        <position position="135"/>
    </location>
</feature>
<feature type="binding site" evidence="1">
    <location>
        <begin position="93"/>
        <end position="103"/>
    </location>
    <ligand>
        <name>ATP</name>
        <dbReference type="ChEBI" id="CHEBI:30616"/>
    </ligand>
</feature>
<evidence type="ECO:0000255" key="1">
    <source>
        <dbReference type="HAMAP-Rule" id="MF_00061"/>
    </source>
</evidence>